<accession>Q8D2V2</accession>
<dbReference type="EMBL" id="BA000021">
    <property type="protein sequence ID" value="BAC24396.1"/>
    <property type="molecule type" value="Genomic_DNA"/>
</dbReference>
<dbReference type="SMR" id="Q8D2V2"/>
<dbReference type="STRING" id="36870.gene:10368743"/>
<dbReference type="KEGG" id="wbr:rplS"/>
<dbReference type="eggNOG" id="COG0335">
    <property type="taxonomic scope" value="Bacteria"/>
</dbReference>
<dbReference type="HOGENOM" id="CLU_103507_2_2_6"/>
<dbReference type="OrthoDB" id="9803541at2"/>
<dbReference type="Proteomes" id="UP000000562">
    <property type="component" value="Chromosome"/>
</dbReference>
<dbReference type="GO" id="GO:1990904">
    <property type="term" value="C:ribonucleoprotein complex"/>
    <property type="evidence" value="ECO:0007669"/>
    <property type="project" value="UniProtKB-KW"/>
</dbReference>
<dbReference type="GO" id="GO:0005840">
    <property type="term" value="C:ribosome"/>
    <property type="evidence" value="ECO:0007669"/>
    <property type="project" value="UniProtKB-KW"/>
</dbReference>
<dbReference type="GO" id="GO:0003735">
    <property type="term" value="F:structural constituent of ribosome"/>
    <property type="evidence" value="ECO:0007669"/>
    <property type="project" value="InterPro"/>
</dbReference>
<dbReference type="GO" id="GO:0006412">
    <property type="term" value="P:translation"/>
    <property type="evidence" value="ECO:0007669"/>
    <property type="project" value="UniProtKB-UniRule"/>
</dbReference>
<dbReference type="Gene3D" id="2.30.30.790">
    <property type="match status" value="1"/>
</dbReference>
<dbReference type="HAMAP" id="MF_00402">
    <property type="entry name" value="Ribosomal_bL19"/>
    <property type="match status" value="1"/>
</dbReference>
<dbReference type="InterPro" id="IPR001857">
    <property type="entry name" value="Ribosomal_bL19"/>
</dbReference>
<dbReference type="InterPro" id="IPR018257">
    <property type="entry name" value="Ribosomal_bL19_CS"/>
</dbReference>
<dbReference type="InterPro" id="IPR038657">
    <property type="entry name" value="Ribosomal_bL19_sf"/>
</dbReference>
<dbReference type="InterPro" id="IPR008991">
    <property type="entry name" value="Translation_prot_SH3-like_sf"/>
</dbReference>
<dbReference type="NCBIfam" id="TIGR01024">
    <property type="entry name" value="rplS_bact"/>
    <property type="match status" value="1"/>
</dbReference>
<dbReference type="PANTHER" id="PTHR15680:SF9">
    <property type="entry name" value="LARGE RIBOSOMAL SUBUNIT PROTEIN BL19M"/>
    <property type="match status" value="1"/>
</dbReference>
<dbReference type="PANTHER" id="PTHR15680">
    <property type="entry name" value="RIBOSOMAL PROTEIN L19"/>
    <property type="match status" value="1"/>
</dbReference>
<dbReference type="Pfam" id="PF01245">
    <property type="entry name" value="Ribosomal_L19"/>
    <property type="match status" value="1"/>
</dbReference>
<dbReference type="PIRSF" id="PIRSF002191">
    <property type="entry name" value="Ribosomal_L19"/>
    <property type="match status" value="1"/>
</dbReference>
<dbReference type="PRINTS" id="PR00061">
    <property type="entry name" value="RIBOSOMALL19"/>
</dbReference>
<dbReference type="SUPFAM" id="SSF50104">
    <property type="entry name" value="Translation proteins SH3-like domain"/>
    <property type="match status" value="1"/>
</dbReference>
<dbReference type="PROSITE" id="PS01015">
    <property type="entry name" value="RIBOSOMAL_L19"/>
    <property type="match status" value="1"/>
</dbReference>
<feature type="chain" id="PRO_0000163569" description="Large ribosomal subunit protein bL19">
    <location>
        <begin position="1"/>
        <end position="115"/>
    </location>
</feature>
<reference key="1">
    <citation type="journal article" date="2002" name="Nat. Genet.">
        <title>Genome sequence of the endocellular obligate symbiont of tsetse flies, Wigglesworthia glossinidia.</title>
        <authorList>
            <person name="Akman L."/>
            <person name="Yamashita A."/>
            <person name="Watanabe H."/>
            <person name="Oshima K."/>
            <person name="Shiba T."/>
            <person name="Hattori M."/>
            <person name="Aksoy S."/>
        </authorList>
    </citation>
    <scope>NUCLEOTIDE SEQUENCE [LARGE SCALE GENOMIC DNA]</scope>
</reference>
<organism>
    <name type="scientific">Wigglesworthia glossinidia brevipalpis</name>
    <dbReference type="NCBI Taxonomy" id="36870"/>
    <lineage>
        <taxon>Bacteria</taxon>
        <taxon>Pseudomonadati</taxon>
        <taxon>Pseudomonadota</taxon>
        <taxon>Gammaproteobacteria</taxon>
        <taxon>Enterobacterales</taxon>
        <taxon>Erwiniaceae</taxon>
        <taxon>Wigglesworthia</taxon>
    </lineage>
</organism>
<evidence type="ECO:0000255" key="1">
    <source>
        <dbReference type="HAMAP-Rule" id="MF_00402"/>
    </source>
</evidence>
<evidence type="ECO:0000305" key="2"/>
<proteinExistence type="inferred from homology"/>
<protein>
    <recommendedName>
        <fullName evidence="1">Large ribosomal subunit protein bL19</fullName>
    </recommendedName>
    <alternativeName>
        <fullName evidence="2">50S ribosomal protein L19</fullName>
    </alternativeName>
</protein>
<comment type="function">
    <text evidence="1">This protein is located at the 30S-50S ribosomal subunit interface and may play a role in the structure and function of the aminoacyl-tRNA binding site.</text>
</comment>
<comment type="similarity">
    <text evidence="1">Belongs to the bacterial ribosomal protein bL19 family.</text>
</comment>
<gene>
    <name evidence="1" type="primary">rplS</name>
    <name type="ordered locus">WIGBR2500</name>
</gene>
<name>RL19_WIGBR</name>
<keyword id="KW-1185">Reference proteome</keyword>
<keyword id="KW-0687">Ribonucleoprotein</keyword>
<keyword id="KW-0689">Ribosomal protein</keyword>
<sequence length="115" mass="13256">MNLINIIENSQKKSNITKLFSGDIVKINIWVLEGNKKRIQIFEGIIIAIKNKGISSSITVRKISNGEGVERMFPLHSPIIESIIVNRHSLVRKSKLYYLRNKKGRSSRIKQRLKK</sequence>